<protein>
    <recommendedName>
        <fullName>Guanine nucleotide-binding protein G(s) subunit alpha</fullName>
    </recommendedName>
    <alternativeName>
        <fullName>Adenylate cyclase-stimulating G alpha protein</fullName>
    </alternativeName>
</protein>
<organism>
    <name type="scientific">Cricetulus griseus</name>
    <name type="common">Chinese hamster</name>
    <name type="synonym">Cricetulus barabensis griseus</name>
    <dbReference type="NCBI Taxonomy" id="10029"/>
    <lineage>
        <taxon>Eukaryota</taxon>
        <taxon>Metazoa</taxon>
        <taxon>Chordata</taxon>
        <taxon>Craniata</taxon>
        <taxon>Vertebrata</taxon>
        <taxon>Euteleostomi</taxon>
        <taxon>Mammalia</taxon>
        <taxon>Eutheria</taxon>
        <taxon>Euarchontoglires</taxon>
        <taxon>Glires</taxon>
        <taxon>Rodentia</taxon>
        <taxon>Myomorpha</taxon>
        <taxon>Muroidea</taxon>
        <taxon>Cricetidae</taxon>
        <taxon>Cricetinae</taxon>
        <taxon>Cricetulus</taxon>
    </lineage>
</organism>
<accession>Q8R4A8</accession>
<accession>Q3HR11</accession>
<feature type="initiator methionine" description="Removed">
    <location>
        <position position="1"/>
    </location>
</feature>
<feature type="chain" id="PRO_0000203719" description="Guanine nucleotide-binding protein G(s) subunit alpha">
    <location>
        <begin position="2"/>
        <end position="394"/>
    </location>
</feature>
<feature type="domain" description="G-alpha" evidence="5">
    <location>
        <begin position="39"/>
        <end position="394"/>
    </location>
</feature>
<feature type="region of interest" description="Disordered" evidence="6">
    <location>
        <begin position="1"/>
        <end position="23"/>
    </location>
</feature>
<feature type="region of interest" description="G1 motif" evidence="5">
    <location>
        <begin position="42"/>
        <end position="55"/>
    </location>
</feature>
<feature type="region of interest" description="Disordered" evidence="6">
    <location>
        <begin position="68"/>
        <end position="90"/>
    </location>
</feature>
<feature type="region of interest" description="G2 motif" evidence="5">
    <location>
        <begin position="196"/>
        <end position="204"/>
    </location>
</feature>
<feature type="region of interest" description="G3 motif" evidence="5">
    <location>
        <begin position="219"/>
        <end position="228"/>
    </location>
</feature>
<feature type="region of interest" description="G4 motif" evidence="5">
    <location>
        <begin position="288"/>
        <end position="295"/>
    </location>
</feature>
<feature type="region of interest" description="G5 motif" evidence="5">
    <location>
        <begin position="364"/>
        <end position="369"/>
    </location>
</feature>
<feature type="compositionally biased region" description="Basic and acidic residues" evidence="6">
    <location>
        <begin position="8"/>
        <end position="23"/>
    </location>
</feature>
<feature type="binding site" evidence="2">
    <location>
        <begin position="47"/>
        <end position="55"/>
    </location>
    <ligand>
        <name>GTP</name>
        <dbReference type="ChEBI" id="CHEBI:37565"/>
    </ligand>
</feature>
<feature type="binding site" evidence="2">
    <location>
        <position position="54"/>
    </location>
    <ligand>
        <name>Mg(2+)</name>
        <dbReference type="ChEBI" id="CHEBI:18420"/>
    </ligand>
</feature>
<feature type="binding site" evidence="2">
    <location>
        <begin position="197"/>
        <end position="204"/>
    </location>
    <ligand>
        <name>GTP</name>
        <dbReference type="ChEBI" id="CHEBI:37565"/>
    </ligand>
</feature>
<feature type="binding site" evidence="2">
    <location>
        <position position="204"/>
    </location>
    <ligand>
        <name>Mg(2+)</name>
        <dbReference type="ChEBI" id="CHEBI:18420"/>
    </ligand>
</feature>
<feature type="binding site" evidence="2">
    <location>
        <begin position="223"/>
        <end position="227"/>
    </location>
    <ligand>
        <name>GTP</name>
        <dbReference type="ChEBI" id="CHEBI:37565"/>
    </ligand>
</feature>
<feature type="binding site" evidence="2">
    <location>
        <begin position="292"/>
        <end position="295"/>
    </location>
    <ligand>
        <name>GTP</name>
        <dbReference type="ChEBI" id="CHEBI:37565"/>
    </ligand>
</feature>
<feature type="binding site" evidence="2">
    <location>
        <position position="366"/>
    </location>
    <ligand>
        <name>GTP</name>
        <dbReference type="ChEBI" id="CHEBI:37565"/>
    </ligand>
</feature>
<feature type="lipid moiety-binding region" description="N-palmitoyl glycine" evidence="2">
    <location>
        <position position="2"/>
    </location>
</feature>
<feature type="lipid moiety-binding region" description="S-palmitoyl cysteine" evidence="1">
    <location>
        <position position="3"/>
    </location>
</feature>
<feature type="sequence conflict" description="In Ref. 2; ABA77546." evidence="7" ref="2">
    <original>V</original>
    <variation>I</variation>
    <location>
        <position position="185"/>
    </location>
</feature>
<feature type="helix" evidence="8">
    <location>
        <begin position="13"/>
        <end position="38"/>
    </location>
</feature>
<feature type="strand" evidence="8">
    <location>
        <begin position="40"/>
        <end position="47"/>
    </location>
</feature>
<feature type="helix" evidence="8">
    <location>
        <begin position="53"/>
        <end position="58"/>
    </location>
</feature>
<evidence type="ECO:0000250" key="1"/>
<evidence type="ECO:0000250" key="2">
    <source>
        <dbReference type="UniProtKB" id="P04896"/>
    </source>
</evidence>
<evidence type="ECO:0000250" key="3">
    <source>
        <dbReference type="UniProtKB" id="P63092"/>
    </source>
</evidence>
<evidence type="ECO:0000250" key="4">
    <source>
        <dbReference type="UniProtKB" id="P63094"/>
    </source>
</evidence>
<evidence type="ECO:0000255" key="5">
    <source>
        <dbReference type="PROSITE-ProRule" id="PRU01230"/>
    </source>
</evidence>
<evidence type="ECO:0000256" key="6">
    <source>
        <dbReference type="SAM" id="MobiDB-lite"/>
    </source>
</evidence>
<evidence type="ECO:0000305" key="7"/>
<evidence type="ECO:0007829" key="8">
    <source>
        <dbReference type="PDB" id="8I2G"/>
    </source>
</evidence>
<comment type="function">
    <text evidence="3">Guanine nucleotide-binding proteins (G proteins) function as transducers in numerous signaling pathways controlled by G protein-coupled receptors (GPCRs). Signaling involves the activation of adenylyl cyclases, resulting in increased levels of the signaling molecule cAMP. GNAS functions downstream of several GPCRs, including beta-adrenergic receptors. Stimulates the Ras signaling pathway via RAPGEF2.</text>
</comment>
<comment type="subunit">
    <text evidence="2 3">Heterotrimeric G proteins are composed of 3 units; alpha, beta and gamma. The alpha chain contains the guanine nucleotide binding site (By similarity). Interacts with CRY1; the interaction may block GPCR-mediated regulation of cAMP concentrations. Interacts with ADCY6 and stimulates its adenylyl cyclase activity (By similarity). Interacts with ADCY2 and ADCY5 (By similarity). Stimulates the ADCY5 adenylyl cyclase activity (By similarity). Interaction with SASH1 (By similarity).</text>
</comment>
<comment type="subcellular location">
    <subcellularLocation>
        <location evidence="4">Cell membrane</location>
        <topology evidence="4">Lipid-anchor</topology>
    </subcellularLocation>
</comment>
<comment type="similarity">
    <text evidence="7">Belongs to the G-alpha family. G(s) subfamily.</text>
</comment>
<keyword id="KW-0002">3D-structure</keyword>
<keyword id="KW-1003">Cell membrane</keyword>
<keyword id="KW-0342">GTP-binding</keyword>
<keyword id="KW-0449">Lipoprotein</keyword>
<keyword id="KW-0460">Magnesium</keyword>
<keyword id="KW-0472">Membrane</keyword>
<keyword id="KW-0479">Metal-binding</keyword>
<keyword id="KW-0547">Nucleotide-binding</keyword>
<keyword id="KW-0564">Palmitate</keyword>
<keyword id="KW-0807">Transducer</keyword>
<proteinExistence type="evidence at protein level"/>
<gene>
    <name type="primary">GNAS</name>
</gene>
<name>GNAS_CRIGR</name>
<reference key="1">
    <citation type="submission" date="2002-02" db="EMBL/GenBank/DDBJ databases">
        <title>Guanine nucleotide-binding protein G(s), alpha subunit, mRNA sequence from Chinese hamster, Cricetulus griseus.</title>
        <authorList>
            <person name="Shay T.T."/>
            <person name="Puhl H.L. III"/>
            <person name="Aronstam R.S."/>
        </authorList>
    </citation>
    <scope>NUCLEOTIDE SEQUENCE [MRNA]</scope>
    <source>
        <tissue>Ovary</tissue>
    </source>
</reference>
<reference key="2">
    <citation type="submission" date="2005-09" db="EMBL/GenBank/DDBJ databases">
        <title>Modulation of GPCR transduction pathways using RNA interference against G-alpha subunits.</title>
        <authorList>
            <person name="Rauly-Lestienne I."/>
            <person name="Binesse J."/>
            <person name="Lestienne F."/>
            <person name="Lauressergues E."/>
            <person name="Ailhaud M.-C."/>
            <person name="Newman-Tancredi A."/>
            <person name="Cussac D."/>
        </authorList>
    </citation>
    <scope>NUCLEOTIDE SEQUENCE [MRNA]</scope>
</reference>
<dbReference type="EMBL" id="AF487552">
    <property type="protein sequence ID" value="AAL93256.1"/>
    <property type="molecule type" value="mRNA"/>
</dbReference>
<dbReference type="EMBL" id="DQ202704">
    <property type="protein sequence ID" value="ABA77546.1"/>
    <property type="molecule type" value="mRNA"/>
</dbReference>
<dbReference type="RefSeq" id="NP_001230982.1">
    <property type="nucleotide sequence ID" value="NM_001244053.1"/>
</dbReference>
<dbReference type="PDB" id="8I2G">
    <property type="method" value="EM"/>
    <property type="resolution" value="2.80 A"/>
    <property type="chains" value="A=6-64, A=205-394"/>
</dbReference>
<dbReference type="PDBsum" id="8I2G"/>
<dbReference type="SMR" id="Q8R4A8"/>
<dbReference type="PaxDb" id="10029-NP_001230982.1"/>
<dbReference type="GeneID" id="100689067"/>
<dbReference type="KEGG" id="cge:100689067"/>
<dbReference type="CTD" id="2778"/>
<dbReference type="eggNOG" id="KOG0099">
    <property type="taxonomic scope" value="Eukaryota"/>
</dbReference>
<dbReference type="OrthoDB" id="5817230at2759"/>
<dbReference type="Proteomes" id="UP000694386">
    <property type="component" value="Unplaced"/>
</dbReference>
<dbReference type="Proteomes" id="UP001108280">
    <property type="component" value="Chromosome 6"/>
</dbReference>
<dbReference type="GO" id="GO:0005737">
    <property type="term" value="C:cytoplasm"/>
    <property type="evidence" value="ECO:0007669"/>
    <property type="project" value="TreeGrafter"/>
</dbReference>
<dbReference type="GO" id="GO:0005834">
    <property type="term" value="C:heterotrimeric G-protein complex"/>
    <property type="evidence" value="ECO:0007669"/>
    <property type="project" value="TreeGrafter"/>
</dbReference>
<dbReference type="GO" id="GO:0010856">
    <property type="term" value="F:adenylate cyclase activator activity"/>
    <property type="evidence" value="ECO:0000250"/>
    <property type="project" value="UniProtKB"/>
</dbReference>
<dbReference type="GO" id="GO:0031698">
    <property type="term" value="F:beta-2 adrenergic receptor binding"/>
    <property type="evidence" value="ECO:0007669"/>
    <property type="project" value="TreeGrafter"/>
</dbReference>
<dbReference type="GO" id="GO:0051430">
    <property type="term" value="F:corticotropin-releasing hormone receptor 1 binding"/>
    <property type="evidence" value="ECO:0007669"/>
    <property type="project" value="TreeGrafter"/>
</dbReference>
<dbReference type="GO" id="GO:0031748">
    <property type="term" value="F:D1 dopamine receptor binding"/>
    <property type="evidence" value="ECO:0007669"/>
    <property type="project" value="TreeGrafter"/>
</dbReference>
<dbReference type="GO" id="GO:0031683">
    <property type="term" value="F:G-protein beta/gamma-subunit complex binding"/>
    <property type="evidence" value="ECO:0007669"/>
    <property type="project" value="InterPro"/>
</dbReference>
<dbReference type="GO" id="GO:0005525">
    <property type="term" value="F:GTP binding"/>
    <property type="evidence" value="ECO:0007669"/>
    <property type="project" value="UniProtKB-KW"/>
</dbReference>
<dbReference type="GO" id="GO:0003924">
    <property type="term" value="F:GTPase activity"/>
    <property type="evidence" value="ECO:0007669"/>
    <property type="project" value="InterPro"/>
</dbReference>
<dbReference type="GO" id="GO:0005159">
    <property type="term" value="F:insulin-like growth factor receptor binding"/>
    <property type="evidence" value="ECO:0007669"/>
    <property type="project" value="TreeGrafter"/>
</dbReference>
<dbReference type="GO" id="GO:0035255">
    <property type="term" value="F:ionotropic glutamate receptor binding"/>
    <property type="evidence" value="ECO:0007669"/>
    <property type="project" value="TreeGrafter"/>
</dbReference>
<dbReference type="GO" id="GO:0046872">
    <property type="term" value="F:metal ion binding"/>
    <property type="evidence" value="ECO:0007669"/>
    <property type="project" value="UniProtKB-KW"/>
</dbReference>
<dbReference type="GO" id="GO:0031852">
    <property type="term" value="F:mu-type opioid receptor binding"/>
    <property type="evidence" value="ECO:0007669"/>
    <property type="project" value="TreeGrafter"/>
</dbReference>
<dbReference type="GO" id="GO:0071880">
    <property type="term" value="P:adenylate cyclase-activating adrenergic receptor signaling pathway"/>
    <property type="evidence" value="ECO:0000250"/>
    <property type="project" value="UniProtKB"/>
</dbReference>
<dbReference type="GO" id="GO:0007191">
    <property type="term" value="P:adenylate cyclase-activating dopamine receptor signaling pathway"/>
    <property type="evidence" value="ECO:0007669"/>
    <property type="project" value="TreeGrafter"/>
</dbReference>
<dbReference type="GO" id="GO:0007189">
    <property type="term" value="P:adenylate cyclase-activating G protein-coupled receptor signaling pathway"/>
    <property type="evidence" value="ECO:0000250"/>
    <property type="project" value="UniProtKB"/>
</dbReference>
<dbReference type="GO" id="GO:0007606">
    <property type="term" value="P:sensory perception of chemical stimulus"/>
    <property type="evidence" value="ECO:0007669"/>
    <property type="project" value="TreeGrafter"/>
</dbReference>
<dbReference type="CDD" id="cd00066">
    <property type="entry name" value="G-alpha"/>
    <property type="match status" value="1"/>
</dbReference>
<dbReference type="FunFam" id="1.10.400.10:FF:000003">
    <property type="entry name" value="Guanine nucleotide-binding protein G(S) subunit alpha"/>
    <property type="match status" value="1"/>
</dbReference>
<dbReference type="FunFam" id="3.40.50.300:FF:006178">
    <property type="entry name" value="Guanine nucleotide-binding protein G(s) subunit alpha isoforms short"/>
    <property type="match status" value="2"/>
</dbReference>
<dbReference type="Gene3D" id="1.10.400.10">
    <property type="entry name" value="GI Alpha 1, domain 2-like"/>
    <property type="match status" value="1"/>
</dbReference>
<dbReference type="Gene3D" id="3.40.50.300">
    <property type="entry name" value="P-loop containing nucleotide triphosphate hydrolases"/>
    <property type="match status" value="1"/>
</dbReference>
<dbReference type="InterPro" id="IPR000367">
    <property type="entry name" value="Gprotein_alpha_S"/>
</dbReference>
<dbReference type="InterPro" id="IPR001019">
    <property type="entry name" value="Gprotein_alpha_su"/>
</dbReference>
<dbReference type="InterPro" id="IPR011025">
    <property type="entry name" value="GproteinA_insert"/>
</dbReference>
<dbReference type="InterPro" id="IPR027417">
    <property type="entry name" value="P-loop_NTPase"/>
</dbReference>
<dbReference type="PANTHER" id="PTHR10218">
    <property type="entry name" value="GTP-BINDING PROTEIN ALPHA SUBUNIT"/>
    <property type="match status" value="1"/>
</dbReference>
<dbReference type="PANTHER" id="PTHR10218:SF357">
    <property type="entry name" value="GUANINE NUCLEOTIDE-BINDING PROTEIN G(S) SUBUNIT ALPHA"/>
    <property type="match status" value="1"/>
</dbReference>
<dbReference type="Pfam" id="PF00503">
    <property type="entry name" value="G-alpha"/>
    <property type="match status" value="1"/>
</dbReference>
<dbReference type="PRINTS" id="PR00318">
    <property type="entry name" value="GPROTEINA"/>
</dbReference>
<dbReference type="PRINTS" id="PR00443">
    <property type="entry name" value="GPROTEINAS"/>
</dbReference>
<dbReference type="SMART" id="SM00275">
    <property type="entry name" value="G_alpha"/>
    <property type="match status" value="1"/>
</dbReference>
<dbReference type="SUPFAM" id="SSF52540">
    <property type="entry name" value="P-loop containing nucleoside triphosphate hydrolases"/>
    <property type="match status" value="1"/>
</dbReference>
<dbReference type="SUPFAM" id="SSF47895">
    <property type="entry name" value="Transducin (alpha subunit), insertion domain"/>
    <property type="match status" value="1"/>
</dbReference>
<dbReference type="PROSITE" id="PS51882">
    <property type="entry name" value="G_ALPHA"/>
    <property type="match status" value="1"/>
</dbReference>
<sequence length="394" mass="45650">MGCLGNSKTEDQRNEEKAQREANKKIEKQLQKDKQVYRATHRLLLLGAGESGKSTIVKQMRILHVNGFNGEGGEEDPQAARSNSDGEKATKVQDIKNNLKEAIETIVAAMSNLVPPVELANPENQFRVDYILSVMNVPNFDFPPEFYEHAKALWEDEGVRACYERSNEYQLIDCAQYFLDKIDVVKQADYVPSDQDLLRCRVLTSGIFETKFQVDKVNFHMFDVGGQRDERRKWIQCFNDVTAIIFVVASSSYNMVIREDNQTNRLQEALNLFKSIWNNRWLRTISVILFLNKQDLLAEKVLAGKSKIEDYFPEFARYTTPEDATPEPGEDPRVTRAKYFIRDEFLRISTASGDGRHYCYPHFTCAVDTENIRRVFNDCRDIIQRMHLRQYELL</sequence>